<sequence length="447" mass="49307">MPPSAAKQMGASTGVHAGVTDSSAFTRKDVADRPDLTIVGDSVYDAKAFRSEHPGGAHFVSLFGGRDATEAFMEYHRRAWPKSRMSRFHVGSLASTEEPVAADEGYLQLCARIAKMVPSVSSGFAPASYWVKAGLILGSAIALEAYMLYAGKRLLPSIVLGWLFALIGLNIQHDANHGALSKSASVNLALGLCQDWIGGSMILWLQEHVVMHHLHTNDVDKDPDQKAHGALRLKPTDAWSPMHWLQHLYLLPGETMYAFKLLFLDISELVMWRWEGEPISKLAGYLFMPSLLLKLTFWARFVALPLYLAPSVHTAVCIAATVMTGSFYLAFFFFISHNFEGVASVGPDGSITSMTRGASFLKRQAETSSNVGGPLLATLNGGLNYQIEHHLFPRVHHGFYPRLAPLVKAELEARGIEYKHYPTIWSNLASTLRHMYALGRRPRSKAE</sequence>
<keyword id="KW-0249">Electron transport</keyword>
<keyword id="KW-0275">Fatty acid biosynthesis</keyword>
<keyword id="KW-0276">Fatty acid metabolism</keyword>
<keyword id="KW-0349">Heme</keyword>
<keyword id="KW-0408">Iron</keyword>
<keyword id="KW-0444">Lipid biosynthesis</keyword>
<keyword id="KW-0443">Lipid metabolism</keyword>
<keyword id="KW-0472">Membrane</keyword>
<keyword id="KW-0479">Metal-binding</keyword>
<keyword id="KW-0560">Oxidoreductase</keyword>
<keyword id="KW-0812">Transmembrane</keyword>
<keyword id="KW-1133">Transmembrane helix</keyword>
<keyword id="KW-0813">Transport</keyword>
<organism>
    <name type="scientific">Rebecca salina</name>
    <name type="common">Marine microalga</name>
    <name type="synonym">Pavlova salina</name>
    <dbReference type="NCBI Taxonomy" id="561169"/>
    <lineage>
        <taxon>Eukaryota</taxon>
        <taxon>Haptista</taxon>
        <taxon>Haptophyta</taxon>
        <taxon>Pavlovales</taxon>
        <taxon>Pavlovaceae</taxon>
        <taxon>Rebecca</taxon>
    </lineage>
</organism>
<dbReference type="EC" id="1.14.19.31" evidence="7"/>
<dbReference type="EMBL" id="AY926606">
    <property type="protein sequence ID" value="AAY15136.1"/>
    <property type="molecule type" value="mRNA"/>
</dbReference>
<dbReference type="SMR" id="A0PJ29"/>
<dbReference type="BioCyc" id="MetaCyc:MONOMER-19039"/>
<dbReference type="BRENDA" id="1.14.19.31">
    <property type="organism ID" value="14018"/>
</dbReference>
<dbReference type="GO" id="GO:0016020">
    <property type="term" value="C:membrane"/>
    <property type="evidence" value="ECO:0007669"/>
    <property type="project" value="UniProtKB-SubCell"/>
</dbReference>
<dbReference type="GO" id="GO:0046872">
    <property type="term" value="F:metal ion binding"/>
    <property type="evidence" value="ECO:0007669"/>
    <property type="project" value="UniProtKB-KW"/>
</dbReference>
<dbReference type="GO" id="GO:0016717">
    <property type="term" value="F:oxidoreductase activity, acting on paired donors, with oxidation of a pair of donors resulting in the reduction of molecular oxygen to two molecules of water"/>
    <property type="evidence" value="ECO:0000314"/>
    <property type="project" value="UniProtKB"/>
</dbReference>
<dbReference type="GO" id="GO:0042759">
    <property type="term" value="P:long-chain fatty acid biosynthetic process"/>
    <property type="evidence" value="ECO:0000314"/>
    <property type="project" value="UniProtKB"/>
</dbReference>
<dbReference type="GO" id="GO:0006636">
    <property type="term" value="P:unsaturated fatty acid biosynthetic process"/>
    <property type="evidence" value="ECO:0000314"/>
    <property type="project" value="UniProtKB"/>
</dbReference>
<dbReference type="CDD" id="cd03506">
    <property type="entry name" value="Delta6-FADS-like"/>
    <property type="match status" value="1"/>
</dbReference>
<dbReference type="FunFam" id="3.10.120.10:FF:000032">
    <property type="entry name" value="Acyl-lipid (7-3)-desaturase"/>
    <property type="match status" value="1"/>
</dbReference>
<dbReference type="Gene3D" id="3.10.120.10">
    <property type="entry name" value="Cytochrome b5-like heme/steroid binding domain"/>
    <property type="match status" value="1"/>
</dbReference>
<dbReference type="InterPro" id="IPR001199">
    <property type="entry name" value="Cyt_B5-like_heme/steroid-bd"/>
</dbReference>
<dbReference type="InterPro" id="IPR036400">
    <property type="entry name" value="Cyt_B5-like_heme/steroid_sf"/>
</dbReference>
<dbReference type="InterPro" id="IPR005804">
    <property type="entry name" value="FA_desaturase_dom"/>
</dbReference>
<dbReference type="InterPro" id="IPR012171">
    <property type="entry name" value="Fatty_acid_desaturase"/>
</dbReference>
<dbReference type="PANTHER" id="PTHR19353">
    <property type="entry name" value="FATTY ACID DESATURASE 2"/>
    <property type="match status" value="1"/>
</dbReference>
<dbReference type="PANTHER" id="PTHR19353:SF75">
    <property type="entry name" value="FATTY ACID DESATURASE, PUTATIVE-RELATED"/>
    <property type="match status" value="1"/>
</dbReference>
<dbReference type="Pfam" id="PF00173">
    <property type="entry name" value="Cyt-b5"/>
    <property type="match status" value="1"/>
</dbReference>
<dbReference type="Pfam" id="PF00487">
    <property type="entry name" value="FA_desaturase"/>
    <property type="match status" value="1"/>
</dbReference>
<dbReference type="PIRSF" id="PIRSF015921">
    <property type="entry name" value="FA_sphinglp_des"/>
    <property type="match status" value="1"/>
</dbReference>
<dbReference type="PRINTS" id="PR00363">
    <property type="entry name" value="CYTOCHROMEB5"/>
</dbReference>
<dbReference type="SMART" id="SM01117">
    <property type="entry name" value="Cyt-b5"/>
    <property type="match status" value="1"/>
</dbReference>
<dbReference type="SUPFAM" id="SSF55856">
    <property type="entry name" value="Cytochrome b5-like heme/steroid binding domain"/>
    <property type="match status" value="1"/>
</dbReference>
<dbReference type="PROSITE" id="PS50255">
    <property type="entry name" value="CYTOCHROME_B5_2"/>
    <property type="match status" value="1"/>
</dbReference>
<proteinExistence type="evidence at protein level"/>
<comment type="function">
    <text evidence="4">Fatty acid desaturase that introduces a cis double bond at the 4-position in 22-carbon polyunsaturated fatty acids that contain a Delta(7) double bond, resulting in the production of delta-4 desaturated fatty acid docosahexanoic acid (DHA).</text>
</comment>
<comment type="catalytic activity">
    <reaction evidence="7">
        <text>a (7Z,10Z,13Z,16Z,19Z)-docosapentaenoyl-containing glycerolipid + 2 Fe(II)-[cytochrome b5] + O2 + 2 H(+) = a (4Z,7Z,10Z,13Z,16Z,19Z)-docosahexaenoyl-containing glycerolipid + 2 Fe(III)-[cytochrome b5] + 2 H2O</text>
        <dbReference type="Rhea" id="RHEA:46252"/>
        <dbReference type="Rhea" id="RHEA-COMP:10438"/>
        <dbReference type="Rhea" id="RHEA-COMP:10439"/>
        <dbReference type="ChEBI" id="CHEBI:15377"/>
        <dbReference type="ChEBI" id="CHEBI:15378"/>
        <dbReference type="ChEBI" id="CHEBI:15379"/>
        <dbReference type="ChEBI" id="CHEBI:29033"/>
        <dbReference type="ChEBI" id="CHEBI:29034"/>
        <dbReference type="ChEBI" id="CHEBI:88266"/>
        <dbReference type="ChEBI" id="CHEBI:88267"/>
        <dbReference type="EC" id="1.14.19.31"/>
    </reaction>
</comment>
<comment type="catalytic activity">
    <reaction evidence="7">
        <text>a (7Z,10Z,13Z,16Z)-docosatetraenoyl-containing glycerolipid + 2 Fe(II)-[cytochrome b5] + O2 + 2 H(+) = a (4Z,7Z,10Z,13Z,16Z)-docosapentaenoyl-containing glycerolipid + 2 Fe(III)-[cytochrome b5] + 2 H2O</text>
        <dbReference type="Rhea" id="RHEA:46256"/>
        <dbReference type="Rhea" id="RHEA-COMP:10438"/>
        <dbReference type="Rhea" id="RHEA-COMP:10439"/>
        <dbReference type="ChEBI" id="CHEBI:15377"/>
        <dbReference type="ChEBI" id="CHEBI:15378"/>
        <dbReference type="ChEBI" id="CHEBI:15379"/>
        <dbReference type="ChEBI" id="CHEBI:29033"/>
        <dbReference type="ChEBI" id="CHEBI:29034"/>
        <dbReference type="ChEBI" id="CHEBI:88264"/>
        <dbReference type="ChEBI" id="CHEBI:88265"/>
        <dbReference type="EC" id="1.14.19.31"/>
    </reaction>
</comment>
<comment type="cofactor">
    <cofactor evidence="1">
        <name>Fe(2+)</name>
        <dbReference type="ChEBI" id="CHEBI:29033"/>
    </cofactor>
</comment>
<comment type="subcellular location">
    <subcellularLocation>
        <location evidence="2">Membrane</location>
        <topology evidence="2">Multi-pass membrane protein</topology>
    </subcellularLocation>
</comment>
<comment type="domain">
    <text evidence="6">The cytochrome b5 heme-binding domain acts as the direct electron donor to the active site of the desaturase, and does not require an external cytochrome.</text>
</comment>
<comment type="similarity">
    <text evidence="6">Belongs to the fatty acid desaturase type 1 family.</text>
</comment>
<gene>
    <name evidence="5" type="primary">D4Des</name>
</gene>
<name>D4FAD_REBSA</name>
<feature type="chain" id="PRO_0000434757" description="Acyl-lipid (7-3)-desaturase">
    <location>
        <begin position="1"/>
        <end position="447"/>
    </location>
</feature>
<feature type="transmembrane region" description="Helical" evidence="2">
    <location>
        <begin position="123"/>
        <end position="143"/>
    </location>
</feature>
<feature type="transmembrane region" description="Helical" evidence="2">
    <location>
        <begin position="154"/>
        <end position="174"/>
    </location>
</feature>
<feature type="transmembrane region" description="Helical" evidence="2">
    <location>
        <begin position="185"/>
        <end position="205"/>
    </location>
</feature>
<feature type="transmembrane region" description="Helical" evidence="2">
    <location>
        <begin position="244"/>
        <end position="264"/>
    </location>
</feature>
<feature type="transmembrane region" description="Helical" evidence="2">
    <location>
        <begin position="286"/>
        <end position="306"/>
    </location>
</feature>
<feature type="transmembrane region" description="Helical" evidence="2">
    <location>
        <begin position="315"/>
        <end position="335"/>
    </location>
</feature>
<feature type="domain" description="Cytochrome b5 heme-binding" evidence="3">
    <location>
        <begin position="36"/>
        <end position="94"/>
    </location>
</feature>
<feature type="short sequence motif" description="Histidine box-1" evidence="6">
    <location>
        <begin position="173"/>
        <end position="177"/>
    </location>
</feature>
<feature type="short sequence motif" description="Histidine box-2" evidence="6">
    <location>
        <begin position="208"/>
        <end position="213"/>
    </location>
</feature>
<feature type="short sequence motif" description="Histidine box-3" evidence="6">
    <location>
        <begin position="386"/>
        <end position="390"/>
    </location>
</feature>
<feature type="binding site" description="axial binding residue" evidence="3">
    <location>
        <position position="53"/>
    </location>
    <ligand>
        <name>heme</name>
        <dbReference type="ChEBI" id="CHEBI:30413"/>
    </ligand>
    <ligandPart>
        <name>Fe</name>
        <dbReference type="ChEBI" id="CHEBI:18248"/>
    </ligandPart>
</feature>
<feature type="binding site" description="axial binding residue" evidence="3">
    <location>
        <position position="76"/>
    </location>
    <ligand>
        <name>heme</name>
        <dbReference type="ChEBI" id="CHEBI:30413"/>
    </ligand>
    <ligandPart>
        <name>Fe</name>
        <dbReference type="ChEBI" id="CHEBI:18248"/>
    </ligandPart>
</feature>
<reference key="1">
    <citation type="journal article" date="2007" name="Phytochemistry">
        <title>Isolation and characterization of genes from the marine microalga Pavlova salina encoding three front-end desaturases involved in docosahexaenoic acid biosynthesis.</title>
        <authorList>
            <person name="Zhou X.R."/>
            <person name="Robert S.S."/>
            <person name="Petrie J.R."/>
            <person name="Frampton D.M."/>
            <person name="Mansour M.P."/>
            <person name="Blackburn S.I."/>
            <person name="Nichols P.D."/>
            <person name="Green A.G."/>
            <person name="Singh S.P."/>
        </authorList>
    </citation>
    <scope>NUCLEOTIDE SEQUENCE [MRNA]</scope>
    <scope>FUNCTION</scope>
    <scope>CATALYTIC ACTIVITY</scope>
    <source>
        <strain evidence="8">CS-49</strain>
    </source>
</reference>
<accession>A0PJ29</accession>
<protein>
    <recommendedName>
        <fullName evidence="6">Acyl-lipid (7-3)-desaturase</fullName>
        <ecNumber evidence="7">1.14.19.31</ecNumber>
    </recommendedName>
    <alternativeName>
        <fullName evidence="6">Acyl-lipid 4-desaturase</fullName>
    </alternativeName>
    <alternativeName>
        <fullName evidence="5">Delta-4 desaturase</fullName>
        <shortName evidence="5">PsD4Des</shortName>
    </alternativeName>
</protein>
<evidence type="ECO:0000250" key="1">
    <source>
        <dbReference type="UniProtKB" id="O00767"/>
    </source>
</evidence>
<evidence type="ECO:0000255" key="2"/>
<evidence type="ECO:0000255" key="3">
    <source>
        <dbReference type="PROSITE-ProRule" id="PRU00279"/>
    </source>
</evidence>
<evidence type="ECO:0000269" key="4">
    <source>
    </source>
</evidence>
<evidence type="ECO:0000303" key="5">
    <source>
    </source>
</evidence>
<evidence type="ECO:0000305" key="6"/>
<evidence type="ECO:0000305" key="7">
    <source>
    </source>
</evidence>
<evidence type="ECO:0000312" key="8">
    <source>
        <dbReference type="EMBL" id="AAY15136.1"/>
    </source>
</evidence>